<accession>Q5XIU1</accession>
<keyword id="KW-0040">ANK repeat</keyword>
<keyword id="KW-0175">Coiled coil</keyword>
<keyword id="KW-0963">Cytoplasm</keyword>
<keyword id="KW-0251">Elongation factor</keyword>
<keyword id="KW-0648">Protein biosynthesis</keyword>
<keyword id="KW-1185">Reference proteome</keyword>
<keyword id="KW-0677">Repeat</keyword>
<proteinExistence type="evidence at transcript level"/>
<sequence>MDTSDLFASCRKGDVGRVRYLLEQRDVEVNVRDKWDSTPLYYACLCGHEELVRYLLANGARCEANTFDGERCLYGALSDPIRRALRDYKQVTASCRRRDYYDDFLQRLLEQGIHSDVVFVVHGKPFRAHRCILGARSTYFANMLDTKWKGKSVVVLRHPLINPVAFGALLQYLYTGRLDIGVEHVSDCERLAKQCQLWDLLDDLEAKCEKVSEFVASKPGTCVKVLTIEPPPADPRLRADMALLADCALPPELRGDLGELPFPCPDGFSSCPDICFRVADSSFLCHKAFFCGRSDYFRALLDDHFRESEEPVASGDPPVVTLHDISPDIFTHVLYYVYSDHTELPPELAYDVLSVADMYLLPGLKRLCGRSLAQLLEEDSVVGVWRIAKLFRLARLEDQCTEYMAKVIEKLVEREDFVEAVREEAAAVAARQETDSIPLVDDIRFHVASTVQTYSAIEEAQQQLRALENLLVSIGLDC</sequence>
<feature type="chain" id="PRO_0000248269" description="Ankyrin repeat and BTB/POZ domain-containing protein 1">
    <location>
        <begin position="1"/>
        <end position="478"/>
    </location>
</feature>
<feature type="repeat" description="ANK 1" evidence="2">
    <location>
        <begin position="1"/>
        <end position="31"/>
    </location>
</feature>
<feature type="repeat" description="ANK 2" evidence="2">
    <location>
        <begin position="35"/>
        <end position="64"/>
    </location>
</feature>
<feature type="domain" description="BTB 1" evidence="3">
    <location>
        <begin position="115"/>
        <end position="182"/>
    </location>
</feature>
<feature type="domain" description="BTB 2" evidence="3">
    <location>
        <begin position="272"/>
        <end position="346"/>
    </location>
</feature>
<feature type="coiled-coil region" evidence="2">
    <location>
        <begin position="450"/>
        <end position="478"/>
    </location>
</feature>
<evidence type="ECO:0000250" key="1">
    <source>
        <dbReference type="UniProtKB" id="Q969K4"/>
    </source>
</evidence>
<evidence type="ECO:0000255" key="2"/>
<evidence type="ECO:0000255" key="3">
    <source>
        <dbReference type="PROSITE-ProRule" id="PRU00037"/>
    </source>
</evidence>
<evidence type="ECO:0000312" key="4">
    <source>
        <dbReference type="EMBL" id="AAH83579.1"/>
    </source>
</evidence>
<comment type="function">
    <text evidence="1">May act as a mediator of the PTEN growth-suppressive signaling pathway. May play a role in developmental processes (By similarity).</text>
</comment>
<comment type="subcellular location">
    <subcellularLocation>
        <location evidence="1">Cytoplasm</location>
    </subcellularLocation>
</comment>
<name>ABTB1_RAT</name>
<protein>
    <recommendedName>
        <fullName>Ankyrin repeat and BTB/POZ domain-containing protein 1</fullName>
    </recommendedName>
</protein>
<reference key="1">
    <citation type="journal article" date="2004" name="Genome Res.">
        <title>The status, quality, and expansion of the NIH full-length cDNA project: the Mammalian Gene Collection (MGC).</title>
        <authorList>
            <consortium name="The MGC Project Team"/>
        </authorList>
    </citation>
    <scope>NUCLEOTIDE SEQUENCE [LARGE SCALE MRNA]</scope>
    <source>
        <tissue>Kidney</tissue>
    </source>
</reference>
<organism>
    <name type="scientific">Rattus norvegicus</name>
    <name type="common">Rat</name>
    <dbReference type="NCBI Taxonomy" id="10116"/>
    <lineage>
        <taxon>Eukaryota</taxon>
        <taxon>Metazoa</taxon>
        <taxon>Chordata</taxon>
        <taxon>Craniata</taxon>
        <taxon>Vertebrata</taxon>
        <taxon>Euteleostomi</taxon>
        <taxon>Mammalia</taxon>
        <taxon>Eutheria</taxon>
        <taxon>Euarchontoglires</taxon>
        <taxon>Glires</taxon>
        <taxon>Rodentia</taxon>
        <taxon>Myomorpha</taxon>
        <taxon>Muroidea</taxon>
        <taxon>Muridae</taxon>
        <taxon>Murinae</taxon>
        <taxon>Rattus</taxon>
    </lineage>
</organism>
<gene>
    <name evidence="4" type="primary">Abtb1</name>
</gene>
<dbReference type="EMBL" id="BC083579">
    <property type="protein sequence ID" value="AAH83579.1"/>
    <property type="molecule type" value="mRNA"/>
</dbReference>
<dbReference type="RefSeq" id="NP_001005902.1">
    <property type="nucleotide sequence ID" value="NM_001005902.1"/>
</dbReference>
<dbReference type="SMR" id="Q5XIU1"/>
<dbReference type="FunCoup" id="Q5XIU1">
    <property type="interactions" value="129"/>
</dbReference>
<dbReference type="STRING" id="10116.ENSRNOP00000021445"/>
<dbReference type="PhosphoSitePlus" id="Q5XIU1"/>
<dbReference type="SwissPalm" id="Q5XIU1"/>
<dbReference type="PaxDb" id="10116-ENSRNOP00000021445"/>
<dbReference type="GeneID" id="297432"/>
<dbReference type="KEGG" id="rno:297432"/>
<dbReference type="UCSC" id="RGD:1359363">
    <property type="organism name" value="rat"/>
</dbReference>
<dbReference type="AGR" id="RGD:1359363"/>
<dbReference type="CTD" id="80325"/>
<dbReference type="RGD" id="1359363">
    <property type="gene designation" value="Abtb1"/>
</dbReference>
<dbReference type="VEuPathDB" id="HostDB:ENSRNOG00000015762"/>
<dbReference type="eggNOG" id="KOG0511">
    <property type="taxonomic scope" value="Eukaryota"/>
</dbReference>
<dbReference type="HOGENOM" id="CLU_022885_0_0_1"/>
<dbReference type="InParanoid" id="Q5XIU1"/>
<dbReference type="OrthoDB" id="13718at9989"/>
<dbReference type="PhylomeDB" id="Q5XIU1"/>
<dbReference type="TreeFam" id="TF329194"/>
<dbReference type="PRO" id="PR:Q5XIU1"/>
<dbReference type="Proteomes" id="UP000002494">
    <property type="component" value="Chromosome 4"/>
</dbReference>
<dbReference type="Bgee" id="ENSRNOG00000015762">
    <property type="expression patterns" value="Expressed in skeletal muscle tissue and 20 other cell types or tissues"/>
</dbReference>
<dbReference type="GO" id="GO:0005737">
    <property type="term" value="C:cytoplasm"/>
    <property type="evidence" value="ECO:0000318"/>
    <property type="project" value="GO_Central"/>
</dbReference>
<dbReference type="GO" id="GO:0000151">
    <property type="term" value="C:ubiquitin ligase complex"/>
    <property type="evidence" value="ECO:0000318"/>
    <property type="project" value="GO_Central"/>
</dbReference>
<dbReference type="GO" id="GO:0003746">
    <property type="term" value="F:translation elongation factor activity"/>
    <property type="evidence" value="ECO:0007669"/>
    <property type="project" value="UniProtKB-KW"/>
</dbReference>
<dbReference type="CDD" id="cd18497">
    <property type="entry name" value="BACK_ABTB1_BPOZ"/>
    <property type="match status" value="1"/>
</dbReference>
<dbReference type="CDD" id="cd18295">
    <property type="entry name" value="BTB1_POZ_ABTB1_BPOZ1"/>
    <property type="match status" value="1"/>
</dbReference>
<dbReference type="CDD" id="cd18296">
    <property type="entry name" value="BTB2_POZ_ABTB1_BPOZ1"/>
    <property type="match status" value="1"/>
</dbReference>
<dbReference type="FunFam" id="1.25.40.20:FF:000115">
    <property type="entry name" value="Ankyrin repeat and BTB/POZ domain-containing protein 1"/>
    <property type="match status" value="1"/>
</dbReference>
<dbReference type="FunFam" id="3.30.710.10:FF:000063">
    <property type="entry name" value="Ankyrin repeat and BTB/POZ domain-containing protein 1"/>
    <property type="match status" value="1"/>
</dbReference>
<dbReference type="FunFam" id="3.30.710.10:FF:000064">
    <property type="entry name" value="Ankyrin repeat and BTB/POZ domain-containing protein 1"/>
    <property type="match status" value="1"/>
</dbReference>
<dbReference type="Gene3D" id="1.25.40.20">
    <property type="entry name" value="Ankyrin repeat-containing domain"/>
    <property type="match status" value="1"/>
</dbReference>
<dbReference type="Gene3D" id="3.30.710.10">
    <property type="entry name" value="Potassium Channel Kv1.1, Chain A"/>
    <property type="match status" value="2"/>
</dbReference>
<dbReference type="InterPro" id="IPR044515">
    <property type="entry name" value="ABTB1"/>
</dbReference>
<dbReference type="InterPro" id="IPR002110">
    <property type="entry name" value="Ankyrin_rpt"/>
</dbReference>
<dbReference type="InterPro" id="IPR036770">
    <property type="entry name" value="Ankyrin_rpt-contain_sf"/>
</dbReference>
<dbReference type="InterPro" id="IPR000210">
    <property type="entry name" value="BTB/POZ_dom"/>
</dbReference>
<dbReference type="InterPro" id="IPR011333">
    <property type="entry name" value="SKP1/BTB/POZ_sf"/>
</dbReference>
<dbReference type="PANTHER" id="PTHR46231">
    <property type="entry name" value="ANKYRIN REPEAT AND BTB/POZ DOMAIN-CONTAINING PROTEIN 1"/>
    <property type="match status" value="1"/>
</dbReference>
<dbReference type="PANTHER" id="PTHR46231:SF1">
    <property type="entry name" value="ANKYRIN REPEAT AND BTB_POZ DOMAIN-CONTAINING PROTEIN 1"/>
    <property type="match status" value="1"/>
</dbReference>
<dbReference type="Pfam" id="PF12796">
    <property type="entry name" value="Ank_2"/>
    <property type="match status" value="1"/>
</dbReference>
<dbReference type="Pfam" id="PF00651">
    <property type="entry name" value="BTB"/>
    <property type="match status" value="2"/>
</dbReference>
<dbReference type="SMART" id="SM00248">
    <property type="entry name" value="ANK"/>
    <property type="match status" value="2"/>
</dbReference>
<dbReference type="SMART" id="SM00225">
    <property type="entry name" value="BTB"/>
    <property type="match status" value="2"/>
</dbReference>
<dbReference type="SUPFAM" id="SSF48403">
    <property type="entry name" value="Ankyrin repeat"/>
    <property type="match status" value="1"/>
</dbReference>
<dbReference type="SUPFAM" id="SSF54695">
    <property type="entry name" value="POZ domain"/>
    <property type="match status" value="2"/>
</dbReference>
<dbReference type="PROSITE" id="PS50297">
    <property type="entry name" value="ANK_REP_REGION"/>
    <property type="match status" value="1"/>
</dbReference>
<dbReference type="PROSITE" id="PS50088">
    <property type="entry name" value="ANK_REPEAT"/>
    <property type="match status" value="1"/>
</dbReference>
<dbReference type="PROSITE" id="PS50097">
    <property type="entry name" value="BTB"/>
    <property type="match status" value="2"/>
</dbReference>